<evidence type="ECO:0000255" key="1">
    <source>
        <dbReference type="HAMAP-Rule" id="MF_01261"/>
    </source>
</evidence>
<dbReference type="EC" id="2.7.7.72" evidence="1"/>
<dbReference type="EC" id="3.1.3.-" evidence="1"/>
<dbReference type="EC" id="3.1.4.-" evidence="1"/>
<dbReference type="EMBL" id="CP000284">
    <property type="protein sequence ID" value="ABE50526.1"/>
    <property type="molecule type" value="Genomic_DNA"/>
</dbReference>
<dbReference type="RefSeq" id="WP_011480480.1">
    <property type="nucleotide sequence ID" value="NC_007947.1"/>
</dbReference>
<dbReference type="SMR" id="Q1GZ11"/>
<dbReference type="STRING" id="265072.Mfla_2259"/>
<dbReference type="KEGG" id="mfa:Mfla_2259"/>
<dbReference type="eggNOG" id="COG0617">
    <property type="taxonomic scope" value="Bacteria"/>
</dbReference>
<dbReference type="HOGENOM" id="CLU_015961_1_1_4"/>
<dbReference type="OrthoDB" id="9805698at2"/>
<dbReference type="Proteomes" id="UP000002440">
    <property type="component" value="Chromosome"/>
</dbReference>
<dbReference type="GO" id="GO:0005524">
    <property type="term" value="F:ATP binding"/>
    <property type="evidence" value="ECO:0007669"/>
    <property type="project" value="UniProtKB-UniRule"/>
</dbReference>
<dbReference type="GO" id="GO:0004810">
    <property type="term" value="F:CCA tRNA nucleotidyltransferase activity"/>
    <property type="evidence" value="ECO:0007669"/>
    <property type="project" value="UniProtKB-UniRule"/>
</dbReference>
<dbReference type="GO" id="GO:0004112">
    <property type="term" value="F:cyclic-nucleotide phosphodiesterase activity"/>
    <property type="evidence" value="ECO:0007669"/>
    <property type="project" value="UniProtKB-UniRule"/>
</dbReference>
<dbReference type="GO" id="GO:0000287">
    <property type="term" value="F:magnesium ion binding"/>
    <property type="evidence" value="ECO:0007669"/>
    <property type="project" value="UniProtKB-UniRule"/>
</dbReference>
<dbReference type="GO" id="GO:0016791">
    <property type="term" value="F:phosphatase activity"/>
    <property type="evidence" value="ECO:0007669"/>
    <property type="project" value="UniProtKB-UniRule"/>
</dbReference>
<dbReference type="GO" id="GO:0000049">
    <property type="term" value="F:tRNA binding"/>
    <property type="evidence" value="ECO:0007669"/>
    <property type="project" value="UniProtKB-UniRule"/>
</dbReference>
<dbReference type="GO" id="GO:0042245">
    <property type="term" value="P:RNA repair"/>
    <property type="evidence" value="ECO:0007669"/>
    <property type="project" value="UniProtKB-KW"/>
</dbReference>
<dbReference type="GO" id="GO:0001680">
    <property type="term" value="P:tRNA 3'-terminal CCA addition"/>
    <property type="evidence" value="ECO:0007669"/>
    <property type="project" value="UniProtKB-UniRule"/>
</dbReference>
<dbReference type="CDD" id="cd05398">
    <property type="entry name" value="NT_ClassII-CCAase"/>
    <property type="match status" value="1"/>
</dbReference>
<dbReference type="Gene3D" id="3.30.460.10">
    <property type="entry name" value="Beta Polymerase, domain 2"/>
    <property type="match status" value="1"/>
</dbReference>
<dbReference type="Gene3D" id="1.10.3090.10">
    <property type="entry name" value="cca-adding enzyme, domain 2"/>
    <property type="match status" value="1"/>
</dbReference>
<dbReference type="HAMAP" id="MF_01261">
    <property type="entry name" value="CCA_bact_type1"/>
    <property type="match status" value="1"/>
</dbReference>
<dbReference type="HAMAP" id="MF_01262">
    <property type="entry name" value="CCA_bact_type2"/>
    <property type="match status" value="1"/>
</dbReference>
<dbReference type="InterPro" id="IPR012006">
    <property type="entry name" value="CCA_bact"/>
</dbReference>
<dbReference type="InterPro" id="IPR006674">
    <property type="entry name" value="HD_domain"/>
</dbReference>
<dbReference type="InterPro" id="IPR043519">
    <property type="entry name" value="NT_sf"/>
</dbReference>
<dbReference type="InterPro" id="IPR002646">
    <property type="entry name" value="PolA_pol_head_dom"/>
</dbReference>
<dbReference type="InterPro" id="IPR032828">
    <property type="entry name" value="PolyA_RNA-bd"/>
</dbReference>
<dbReference type="InterPro" id="IPR050124">
    <property type="entry name" value="tRNA_CCA-adding_enzyme"/>
</dbReference>
<dbReference type="NCBIfam" id="NF008137">
    <property type="entry name" value="PRK10885.1"/>
    <property type="match status" value="1"/>
</dbReference>
<dbReference type="PANTHER" id="PTHR47545">
    <property type="entry name" value="MULTIFUNCTIONAL CCA PROTEIN"/>
    <property type="match status" value="1"/>
</dbReference>
<dbReference type="PANTHER" id="PTHR47545:SF1">
    <property type="entry name" value="MULTIFUNCTIONAL CCA PROTEIN"/>
    <property type="match status" value="1"/>
</dbReference>
<dbReference type="Pfam" id="PF01966">
    <property type="entry name" value="HD"/>
    <property type="match status" value="1"/>
</dbReference>
<dbReference type="Pfam" id="PF01743">
    <property type="entry name" value="PolyA_pol"/>
    <property type="match status" value="1"/>
</dbReference>
<dbReference type="Pfam" id="PF12627">
    <property type="entry name" value="PolyA_pol_RNAbd"/>
    <property type="match status" value="1"/>
</dbReference>
<dbReference type="PIRSF" id="PIRSF000813">
    <property type="entry name" value="CCA_bact"/>
    <property type="match status" value="1"/>
</dbReference>
<dbReference type="SUPFAM" id="SSF81301">
    <property type="entry name" value="Nucleotidyltransferase"/>
    <property type="match status" value="1"/>
</dbReference>
<dbReference type="SUPFAM" id="SSF81891">
    <property type="entry name" value="Poly A polymerase C-terminal region-like"/>
    <property type="match status" value="1"/>
</dbReference>
<dbReference type="PROSITE" id="PS51831">
    <property type="entry name" value="HD"/>
    <property type="match status" value="1"/>
</dbReference>
<feature type="chain" id="PRO_1000054273" description="Multifunctional CCA protein">
    <location>
        <begin position="1"/>
        <end position="411"/>
    </location>
</feature>
<feature type="domain" description="HD" evidence="1">
    <location>
        <begin position="226"/>
        <end position="327"/>
    </location>
</feature>
<feature type="binding site" evidence="1">
    <location>
        <position position="8"/>
    </location>
    <ligand>
        <name>ATP</name>
        <dbReference type="ChEBI" id="CHEBI:30616"/>
    </ligand>
</feature>
<feature type="binding site" evidence="1">
    <location>
        <position position="8"/>
    </location>
    <ligand>
        <name>CTP</name>
        <dbReference type="ChEBI" id="CHEBI:37563"/>
    </ligand>
</feature>
<feature type="binding site" evidence="1">
    <location>
        <position position="11"/>
    </location>
    <ligand>
        <name>ATP</name>
        <dbReference type="ChEBI" id="CHEBI:30616"/>
    </ligand>
</feature>
<feature type="binding site" evidence="1">
    <location>
        <position position="11"/>
    </location>
    <ligand>
        <name>CTP</name>
        <dbReference type="ChEBI" id="CHEBI:37563"/>
    </ligand>
</feature>
<feature type="binding site" evidence="1">
    <location>
        <position position="21"/>
    </location>
    <ligand>
        <name>Mg(2+)</name>
        <dbReference type="ChEBI" id="CHEBI:18420"/>
    </ligand>
</feature>
<feature type="binding site" evidence="1">
    <location>
        <position position="23"/>
    </location>
    <ligand>
        <name>Mg(2+)</name>
        <dbReference type="ChEBI" id="CHEBI:18420"/>
    </ligand>
</feature>
<feature type="binding site" evidence="1">
    <location>
        <position position="91"/>
    </location>
    <ligand>
        <name>ATP</name>
        <dbReference type="ChEBI" id="CHEBI:30616"/>
    </ligand>
</feature>
<feature type="binding site" evidence="1">
    <location>
        <position position="91"/>
    </location>
    <ligand>
        <name>CTP</name>
        <dbReference type="ChEBI" id="CHEBI:37563"/>
    </ligand>
</feature>
<feature type="binding site" evidence="1">
    <location>
        <position position="137"/>
    </location>
    <ligand>
        <name>ATP</name>
        <dbReference type="ChEBI" id="CHEBI:30616"/>
    </ligand>
</feature>
<feature type="binding site" evidence="1">
    <location>
        <position position="137"/>
    </location>
    <ligand>
        <name>CTP</name>
        <dbReference type="ChEBI" id="CHEBI:37563"/>
    </ligand>
</feature>
<feature type="binding site" evidence="1">
    <location>
        <position position="140"/>
    </location>
    <ligand>
        <name>ATP</name>
        <dbReference type="ChEBI" id="CHEBI:30616"/>
    </ligand>
</feature>
<feature type="binding site" evidence="1">
    <location>
        <position position="140"/>
    </location>
    <ligand>
        <name>CTP</name>
        <dbReference type="ChEBI" id="CHEBI:37563"/>
    </ligand>
</feature>
<comment type="function">
    <text evidence="1">Catalyzes the addition and repair of the essential 3'-terminal CCA sequence in tRNAs without using a nucleic acid template. Adds these three nucleotides in the order of C, C, and A to the tRNA nucleotide-73, using CTP and ATP as substrates and producing inorganic pyrophosphate. tRNA 3'-terminal CCA addition is required both for tRNA processing and repair. Also involved in tRNA surveillance by mediating tandem CCA addition to generate a CCACCA at the 3' terminus of unstable tRNAs. While stable tRNAs receive only 3'-terminal CCA, unstable tRNAs are marked with CCACCA and rapidly degraded.</text>
</comment>
<comment type="catalytic activity">
    <reaction evidence="1">
        <text>a tRNA precursor + 2 CTP + ATP = a tRNA with a 3' CCA end + 3 diphosphate</text>
        <dbReference type="Rhea" id="RHEA:14433"/>
        <dbReference type="Rhea" id="RHEA-COMP:10465"/>
        <dbReference type="Rhea" id="RHEA-COMP:10468"/>
        <dbReference type="ChEBI" id="CHEBI:30616"/>
        <dbReference type="ChEBI" id="CHEBI:33019"/>
        <dbReference type="ChEBI" id="CHEBI:37563"/>
        <dbReference type="ChEBI" id="CHEBI:74896"/>
        <dbReference type="ChEBI" id="CHEBI:83071"/>
        <dbReference type="EC" id="2.7.7.72"/>
    </reaction>
</comment>
<comment type="catalytic activity">
    <reaction evidence="1">
        <text>a tRNA with a 3' CCA end + 2 CTP + ATP = a tRNA with a 3' CCACCA end + 3 diphosphate</text>
        <dbReference type="Rhea" id="RHEA:76235"/>
        <dbReference type="Rhea" id="RHEA-COMP:10468"/>
        <dbReference type="Rhea" id="RHEA-COMP:18655"/>
        <dbReference type="ChEBI" id="CHEBI:30616"/>
        <dbReference type="ChEBI" id="CHEBI:33019"/>
        <dbReference type="ChEBI" id="CHEBI:37563"/>
        <dbReference type="ChEBI" id="CHEBI:83071"/>
        <dbReference type="ChEBI" id="CHEBI:195187"/>
    </reaction>
    <physiologicalReaction direction="left-to-right" evidence="1">
        <dbReference type="Rhea" id="RHEA:76236"/>
    </physiologicalReaction>
</comment>
<comment type="cofactor">
    <cofactor evidence="1">
        <name>Mg(2+)</name>
        <dbReference type="ChEBI" id="CHEBI:18420"/>
    </cofactor>
    <text evidence="1">Magnesium is required for nucleotidyltransferase activity.</text>
</comment>
<comment type="cofactor">
    <cofactor evidence="1">
        <name>Ni(2+)</name>
        <dbReference type="ChEBI" id="CHEBI:49786"/>
    </cofactor>
    <text evidence="1">Nickel for phosphatase activity.</text>
</comment>
<comment type="subunit">
    <text evidence="1">Monomer. Can also form homodimers and oligomers.</text>
</comment>
<comment type="domain">
    <text evidence="1">Comprises two domains: an N-terminal domain containing the nucleotidyltransferase activity and a C-terminal HD domain associated with both phosphodiesterase and phosphatase activities.</text>
</comment>
<comment type="miscellaneous">
    <text evidence="1">A single active site specifically recognizes both ATP and CTP and is responsible for their addition.</text>
</comment>
<comment type="similarity">
    <text evidence="1">Belongs to the tRNA nucleotidyltransferase/poly(A) polymerase family. Bacterial CCA-adding enzyme type 1 subfamily.</text>
</comment>
<reference key="1">
    <citation type="submission" date="2006-03" db="EMBL/GenBank/DDBJ databases">
        <title>Complete sequence of Methylobacillus flagellatus KT.</title>
        <authorList>
            <consortium name="US DOE Joint Genome Institute"/>
            <person name="Copeland A."/>
            <person name="Lucas S."/>
            <person name="Lapidus A."/>
            <person name="Barry K."/>
            <person name="Detter J.C."/>
            <person name="Glavina del Rio T."/>
            <person name="Hammon N."/>
            <person name="Israni S."/>
            <person name="Dalin E."/>
            <person name="Tice H."/>
            <person name="Pitluck S."/>
            <person name="Brettin T."/>
            <person name="Bruce D."/>
            <person name="Han C."/>
            <person name="Tapia R."/>
            <person name="Saunders E."/>
            <person name="Gilna P."/>
            <person name="Schmutz J."/>
            <person name="Larimer F."/>
            <person name="Land M."/>
            <person name="Kyrpides N."/>
            <person name="Anderson I."/>
            <person name="Richardson P."/>
        </authorList>
    </citation>
    <scope>NUCLEOTIDE SEQUENCE [LARGE SCALE GENOMIC DNA]</scope>
    <source>
        <strain>ATCC 51484 / DSM 6875 / VKM B-1610 / KT</strain>
    </source>
</reference>
<keyword id="KW-0067">ATP-binding</keyword>
<keyword id="KW-0378">Hydrolase</keyword>
<keyword id="KW-0460">Magnesium</keyword>
<keyword id="KW-0479">Metal-binding</keyword>
<keyword id="KW-0511">Multifunctional enzyme</keyword>
<keyword id="KW-0533">Nickel</keyword>
<keyword id="KW-0547">Nucleotide-binding</keyword>
<keyword id="KW-0548">Nucleotidyltransferase</keyword>
<keyword id="KW-1185">Reference proteome</keyword>
<keyword id="KW-0692">RNA repair</keyword>
<keyword id="KW-0694">RNA-binding</keyword>
<keyword id="KW-0808">Transferase</keyword>
<keyword id="KW-0819">tRNA processing</keyword>
<name>CCA_METFK</name>
<accession>Q1GZ11</accession>
<gene>
    <name evidence="1" type="primary">cca</name>
    <name type="ordered locus">Mfla_2259</name>
</gene>
<sequence>MRIYTVGGAVRDRLLGLPVKDRDHVVVGSTPEAMVQLGYRPVGKDFPVFLHPVTHEEYALARTERKTGKGYKGFQVHADPEVTLEQDLARRDLTINAIAEDEHGNLIDPYHGVADLHAKVLRHVSPAFCEDPVRILRVARFAARFVEFSVADETMTLMRHMVEDGEVDALVPERVWQELAKGLMEQRPSRMFEVLRACGALKRLLPELDRLFGVPQTAKYHPEIDTGVHVMLVIDYAARAGFSLPVRFAALTHDLGKGTTPAHILPRHIGHEERSVELLQSLVKRLRVPNDCKDLALLVAKHHGKVHQVGEMKAATVLRFLQETDALRQPGRFRDFLSACEADARGRTGFEQQALPLFPLLLEILQLVRTVDAGAIAREQSSPDAIKEAVFSARVAAMEAAYRFPLKEAVG</sequence>
<organism>
    <name type="scientific">Methylobacillus flagellatus (strain ATCC 51484 / DSM 6875 / VKM B-1610 / KT)</name>
    <dbReference type="NCBI Taxonomy" id="265072"/>
    <lineage>
        <taxon>Bacteria</taxon>
        <taxon>Pseudomonadati</taxon>
        <taxon>Pseudomonadota</taxon>
        <taxon>Betaproteobacteria</taxon>
        <taxon>Nitrosomonadales</taxon>
        <taxon>Methylophilaceae</taxon>
        <taxon>Methylobacillus</taxon>
    </lineage>
</organism>
<protein>
    <recommendedName>
        <fullName evidence="1">Multifunctional CCA protein</fullName>
    </recommendedName>
    <domain>
        <recommendedName>
            <fullName evidence="1">CCA-adding enzyme</fullName>
            <ecNumber evidence="1">2.7.7.72</ecNumber>
        </recommendedName>
        <alternativeName>
            <fullName evidence="1">CCA tRNA nucleotidyltransferase</fullName>
        </alternativeName>
        <alternativeName>
            <fullName evidence="1">tRNA CCA-pyrophosphorylase</fullName>
        </alternativeName>
        <alternativeName>
            <fullName evidence="1">tRNA adenylyl-/cytidylyl-transferase</fullName>
        </alternativeName>
        <alternativeName>
            <fullName evidence="1">tRNA nucleotidyltransferase</fullName>
        </alternativeName>
        <alternativeName>
            <fullName evidence="1">tRNA-NT</fullName>
        </alternativeName>
    </domain>
    <domain>
        <recommendedName>
            <fullName evidence="1">2'-nucleotidase</fullName>
            <ecNumber evidence="1">3.1.3.-</ecNumber>
        </recommendedName>
    </domain>
    <domain>
        <recommendedName>
            <fullName evidence="1">2',3'-cyclic phosphodiesterase</fullName>
            <ecNumber evidence="1">3.1.4.-</ecNumber>
        </recommendedName>
    </domain>
    <domain>
        <recommendedName>
            <fullName evidence="1">Phosphatase</fullName>
            <ecNumber evidence="1">3.1.3.-</ecNumber>
        </recommendedName>
    </domain>
</protein>
<proteinExistence type="inferred from homology"/>